<evidence type="ECO:0000255" key="1">
    <source>
        <dbReference type="HAMAP-Rule" id="MF_00041"/>
    </source>
</evidence>
<reference key="1">
    <citation type="journal article" date="2009" name="PLoS Genet.">
        <title>Organised genome dynamics in the Escherichia coli species results in highly diverse adaptive paths.</title>
        <authorList>
            <person name="Touchon M."/>
            <person name="Hoede C."/>
            <person name="Tenaillon O."/>
            <person name="Barbe V."/>
            <person name="Baeriswyl S."/>
            <person name="Bidet P."/>
            <person name="Bingen E."/>
            <person name="Bonacorsi S."/>
            <person name="Bouchier C."/>
            <person name="Bouvet O."/>
            <person name="Calteau A."/>
            <person name="Chiapello H."/>
            <person name="Clermont O."/>
            <person name="Cruveiller S."/>
            <person name="Danchin A."/>
            <person name="Diard M."/>
            <person name="Dossat C."/>
            <person name="Karoui M.E."/>
            <person name="Frapy E."/>
            <person name="Garry L."/>
            <person name="Ghigo J.M."/>
            <person name="Gilles A.M."/>
            <person name="Johnson J."/>
            <person name="Le Bouguenec C."/>
            <person name="Lescat M."/>
            <person name="Mangenot S."/>
            <person name="Martinez-Jehanne V."/>
            <person name="Matic I."/>
            <person name="Nassif X."/>
            <person name="Oztas S."/>
            <person name="Petit M.A."/>
            <person name="Pichon C."/>
            <person name="Rouy Z."/>
            <person name="Ruf C.S."/>
            <person name="Schneider D."/>
            <person name="Tourret J."/>
            <person name="Vacherie B."/>
            <person name="Vallenet D."/>
            <person name="Medigue C."/>
            <person name="Rocha E.P.C."/>
            <person name="Denamur E."/>
        </authorList>
    </citation>
    <scope>NUCLEOTIDE SEQUENCE [LARGE SCALE GENOMIC DNA]</scope>
    <source>
        <strain>S88 / ExPEC</strain>
    </source>
</reference>
<protein>
    <recommendedName>
        <fullName evidence="1">Cysteine--tRNA ligase</fullName>
        <ecNumber evidence="1">6.1.1.16</ecNumber>
    </recommendedName>
    <alternativeName>
        <fullName evidence="1">Cysteinyl-tRNA synthetase</fullName>
        <shortName evidence="1">CysRS</shortName>
    </alternativeName>
</protein>
<dbReference type="EC" id="6.1.1.16" evidence="1"/>
<dbReference type="EMBL" id="CU928161">
    <property type="protein sequence ID" value="CAR01871.1"/>
    <property type="molecule type" value="Genomic_DNA"/>
</dbReference>
<dbReference type="RefSeq" id="WP_000912345.1">
    <property type="nucleotide sequence ID" value="NC_011742.1"/>
</dbReference>
<dbReference type="SMR" id="B7ME49"/>
<dbReference type="GeneID" id="75204392"/>
<dbReference type="KEGG" id="ecz:ECS88_0526"/>
<dbReference type="HOGENOM" id="CLU_013528_0_1_6"/>
<dbReference type="Proteomes" id="UP000000747">
    <property type="component" value="Chromosome"/>
</dbReference>
<dbReference type="GO" id="GO:0005829">
    <property type="term" value="C:cytosol"/>
    <property type="evidence" value="ECO:0007669"/>
    <property type="project" value="TreeGrafter"/>
</dbReference>
<dbReference type="GO" id="GO:0005524">
    <property type="term" value="F:ATP binding"/>
    <property type="evidence" value="ECO:0007669"/>
    <property type="project" value="UniProtKB-UniRule"/>
</dbReference>
<dbReference type="GO" id="GO:0004817">
    <property type="term" value="F:cysteine-tRNA ligase activity"/>
    <property type="evidence" value="ECO:0007669"/>
    <property type="project" value="UniProtKB-UniRule"/>
</dbReference>
<dbReference type="GO" id="GO:0008270">
    <property type="term" value="F:zinc ion binding"/>
    <property type="evidence" value="ECO:0007669"/>
    <property type="project" value="UniProtKB-UniRule"/>
</dbReference>
<dbReference type="GO" id="GO:0006423">
    <property type="term" value="P:cysteinyl-tRNA aminoacylation"/>
    <property type="evidence" value="ECO:0007669"/>
    <property type="project" value="UniProtKB-UniRule"/>
</dbReference>
<dbReference type="CDD" id="cd07963">
    <property type="entry name" value="Anticodon_Ia_Cys"/>
    <property type="match status" value="1"/>
</dbReference>
<dbReference type="CDD" id="cd00672">
    <property type="entry name" value="CysRS_core"/>
    <property type="match status" value="1"/>
</dbReference>
<dbReference type="FunFam" id="1.20.120.1910:FF:000001">
    <property type="entry name" value="Cysteine--tRNA ligase"/>
    <property type="match status" value="1"/>
</dbReference>
<dbReference type="FunFam" id="3.40.50.620:FF:000009">
    <property type="entry name" value="Cysteine--tRNA ligase"/>
    <property type="match status" value="1"/>
</dbReference>
<dbReference type="Gene3D" id="1.20.120.1910">
    <property type="entry name" value="Cysteine-tRNA ligase, C-terminal anti-codon recognition domain"/>
    <property type="match status" value="1"/>
</dbReference>
<dbReference type="Gene3D" id="3.40.50.620">
    <property type="entry name" value="HUPs"/>
    <property type="match status" value="1"/>
</dbReference>
<dbReference type="HAMAP" id="MF_00041">
    <property type="entry name" value="Cys_tRNA_synth"/>
    <property type="match status" value="1"/>
</dbReference>
<dbReference type="InterPro" id="IPR015803">
    <property type="entry name" value="Cys-tRNA-ligase"/>
</dbReference>
<dbReference type="InterPro" id="IPR015273">
    <property type="entry name" value="Cys-tRNA-synt_Ia_DALR"/>
</dbReference>
<dbReference type="InterPro" id="IPR024909">
    <property type="entry name" value="Cys-tRNA/MSH_ligase"/>
</dbReference>
<dbReference type="InterPro" id="IPR056411">
    <property type="entry name" value="CysS_C"/>
</dbReference>
<dbReference type="InterPro" id="IPR014729">
    <property type="entry name" value="Rossmann-like_a/b/a_fold"/>
</dbReference>
<dbReference type="InterPro" id="IPR032678">
    <property type="entry name" value="tRNA-synt_1_cat_dom"/>
</dbReference>
<dbReference type="InterPro" id="IPR009080">
    <property type="entry name" value="tRNAsynth_Ia_anticodon-bd"/>
</dbReference>
<dbReference type="NCBIfam" id="TIGR00435">
    <property type="entry name" value="cysS"/>
    <property type="match status" value="1"/>
</dbReference>
<dbReference type="PANTHER" id="PTHR10890:SF3">
    <property type="entry name" value="CYSTEINE--TRNA LIGASE, CYTOPLASMIC"/>
    <property type="match status" value="1"/>
</dbReference>
<dbReference type="PANTHER" id="PTHR10890">
    <property type="entry name" value="CYSTEINYL-TRNA SYNTHETASE"/>
    <property type="match status" value="1"/>
</dbReference>
<dbReference type="Pfam" id="PF23493">
    <property type="entry name" value="CysS_C"/>
    <property type="match status" value="1"/>
</dbReference>
<dbReference type="Pfam" id="PF09190">
    <property type="entry name" value="DALR_2"/>
    <property type="match status" value="1"/>
</dbReference>
<dbReference type="Pfam" id="PF01406">
    <property type="entry name" value="tRNA-synt_1e"/>
    <property type="match status" value="1"/>
</dbReference>
<dbReference type="PRINTS" id="PR00983">
    <property type="entry name" value="TRNASYNTHCYS"/>
</dbReference>
<dbReference type="SMART" id="SM00840">
    <property type="entry name" value="DALR_2"/>
    <property type="match status" value="1"/>
</dbReference>
<dbReference type="SUPFAM" id="SSF47323">
    <property type="entry name" value="Anticodon-binding domain of a subclass of class I aminoacyl-tRNA synthetases"/>
    <property type="match status" value="1"/>
</dbReference>
<dbReference type="SUPFAM" id="SSF52374">
    <property type="entry name" value="Nucleotidylyl transferase"/>
    <property type="match status" value="1"/>
</dbReference>
<keyword id="KW-0030">Aminoacyl-tRNA synthetase</keyword>
<keyword id="KW-0067">ATP-binding</keyword>
<keyword id="KW-0963">Cytoplasm</keyword>
<keyword id="KW-0436">Ligase</keyword>
<keyword id="KW-0479">Metal-binding</keyword>
<keyword id="KW-0547">Nucleotide-binding</keyword>
<keyword id="KW-0648">Protein biosynthesis</keyword>
<keyword id="KW-1185">Reference proteome</keyword>
<keyword id="KW-0862">Zinc</keyword>
<sequence>MLKIFNTLTRQKEEFKPIHAGEVGMYVCGITVYDLCHIGHGRTFVAFDVVARYLRFLGYKLKYVRNITDIDDKIIKRANENGESFVALVDRMIAEMHKDFDALNILRPDMEPRATHHIAEIIELTEQLIAKGHAYVADNGDVMFDVPTDPTYGVLSRQDLDQLQAGARVDVVDDKRNPMDFVLWKMSKEGEPSWPSPWGAGRPGWHIECSAMNCKQLGNHFDIHGGGSDLMFPHHENEIAQSTCAHDGQYVNYWMHSGMVMVDREKMSKSLGNFFTVRDVLKYYDAETVRYFLMSGHYRSQLNYSEENLKQARAALERLYTALRGTDKTVAPAGGEAFEARFIEAMDDDFNTPEAYSVLFDMAREVNRLKAEDMAAANAMASHLRKLSAVLGLLEQEPEAFLQSGAQADDSEVAEIEALIQQRLDARKAKDWAAADAARDRLNEMGIVLEDGPQGTTWRRK</sequence>
<gene>
    <name evidence="1" type="primary">cysS</name>
    <name type="ordered locus">ECS88_0526</name>
</gene>
<accession>B7ME49</accession>
<organism>
    <name type="scientific">Escherichia coli O45:K1 (strain S88 / ExPEC)</name>
    <dbReference type="NCBI Taxonomy" id="585035"/>
    <lineage>
        <taxon>Bacteria</taxon>
        <taxon>Pseudomonadati</taxon>
        <taxon>Pseudomonadota</taxon>
        <taxon>Gammaproteobacteria</taxon>
        <taxon>Enterobacterales</taxon>
        <taxon>Enterobacteriaceae</taxon>
        <taxon>Escherichia</taxon>
    </lineage>
</organism>
<proteinExistence type="inferred from homology"/>
<feature type="chain" id="PRO_1000199066" description="Cysteine--tRNA ligase">
    <location>
        <begin position="1"/>
        <end position="461"/>
    </location>
</feature>
<feature type="short sequence motif" description="'HIGH' region">
    <location>
        <begin position="30"/>
        <end position="40"/>
    </location>
</feature>
<feature type="short sequence motif" description="'KMSKS' region">
    <location>
        <begin position="266"/>
        <end position="270"/>
    </location>
</feature>
<feature type="binding site" evidence="1">
    <location>
        <position position="28"/>
    </location>
    <ligand>
        <name>Zn(2+)</name>
        <dbReference type="ChEBI" id="CHEBI:29105"/>
    </ligand>
</feature>
<feature type="binding site" evidence="1">
    <location>
        <position position="209"/>
    </location>
    <ligand>
        <name>Zn(2+)</name>
        <dbReference type="ChEBI" id="CHEBI:29105"/>
    </ligand>
</feature>
<feature type="binding site" evidence="1">
    <location>
        <position position="234"/>
    </location>
    <ligand>
        <name>Zn(2+)</name>
        <dbReference type="ChEBI" id="CHEBI:29105"/>
    </ligand>
</feature>
<feature type="binding site" evidence="1">
    <location>
        <position position="238"/>
    </location>
    <ligand>
        <name>Zn(2+)</name>
        <dbReference type="ChEBI" id="CHEBI:29105"/>
    </ligand>
</feature>
<feature type="binding site" evidence="1">
    <location>
        <position position="269"/>
    </location>
    <ligand>
        <name>ATP</name>
        <dbReference type="ChEBI" id="CHEBI:30616"/>
    </ligand>
</feature>
<comment type="catalytic activity">
    <reaction evidence="1">
        <text>tRNA(Cys) + L-cysteine + ATP = L-cysteinyl-tRNA(Cys) + AMP + diphosphate</text>
        <dbReference type="Rhea" id="RHEA:17773"/>
        <dbReference type="Rhea" id="RHEA-COMP:9661"/>
        <dbReference type="Rhea" id="RHEA-COMP:9679"/>
        <dbReference type="ChEBI" id="CHEBI:30616"/>
        <dbReference type="ChEBI" id="CHEBI:33019"/>
        <dbReference type="ChEBI" id="CHEBI:35235"/>
        <dbReference type="ChEBI" id="CHEBI:78442"/>
        <dbReference type="ChEBI" id="CHEBI:78517"/>
        <dbReference type="ChEBI" id="CHEBI:456215"/>
        <dbReference type="EC" id="6.1.1.16"/>
    </reaction>
</comment>
<comment type="cofactor">
    <cofactor evidence="1">
        <name>Zn(2+)</name>
        <dbReference type="ChEBI" id="CHEBI:29105"/>
    </cofactor>
    <text evidence="1">Binds 1 zinc ion per subunit.</text>
</comment>
<comment type="subunit">
    <text evidence="1">Monomer.</text>
</comment>
<comment type="subcellular location">
    <subcellularLocation>
        <location evidence="1">Cytoplasm</location>
    </subcellularLocation>
</comment>
<comment type="similarity">
    <text evidence="1">Belongs to the class-I aminoacyl-tRNA synthetase family.</text>
</comment>
<name>SYC_ECO45</name>